<proteinExistence type="evidence at protein level"/>
<feature type="chain" id="PRO_0000205761" description="mRNA 3'-end-processing protein RNA14">
    <location>
        <begin position="1"/>
        <end position="677"/>
    </location>
</feature>
<feature type="repeat" description="HAT 1">
    <location>
        <begin position="56"/>
        <end position="88"/>
    </location>
</feature>
<feature type="repeat" description="HAT 2">
    <location>
        <begin position="90"/>
        <end position="124"/>
    </location>
</feature>
<feature type="repeat" description="HAT 3">
    <location>
        <begin position="138"/>
        <end position="170"/>
    </location>
</feature>
<feature type="repeat" description="HAT 4">
    <location>
        <begin position="181"/>
        <end position="214"/>
    </location>
</feature>
<feature type="repeat" description="HAT 5">
    <location>
        <begin position="257"/>
        <end position="289"/>
    </location>
</feature>
<feature type="repeat" description="HAT 6">
    <location>
        <begin position="298"/>
        <end position="330"/>
    </location>
</feature>
<feature type="helix" evidence="7">
    <location>
        <begin position="633"/>
        <end position="641"/>
    </location>
</feature>
<feature type="helix" evidence="7">
    <location>
        <begin position="645"/>
        <end position="648"/>
    </location>
</feature>
<feature type="helix" evidence="7">
    <location>
        <begin position="655"/>
        <end position="664"/>
    </location>
</feature>
<keyword id="KW-0002">3D-structure</keyword>
<keyword id="KW-0963">Cytoplasm</keyword>
<keyword id="KW-0507">mRNA processing</keyword>
<keyword id="KW-0539">Nucleus</keyword>
<keyword id="KW-1185">Reference proteome</keyword>
<keyword id="KW-0677">Repeat</keyword>
<sequence>MSSSTTPDLLYPSADKVAEPSDNIHGDELRLRERIKDNPTNILSYFQLIQYLETQESYAKVREVYEQFHNTFPFYSPAWTLQLKGELARDEFETVEKILAQCLSGKLENNDLSLWSTYLDYIRRKNNLITGGQEARAVIVKAFQLVMQKCAIFEPKSSSFWNEYLNFLEQWKPFNKWEEQQRIDMLREFYKKMLCVPFDNLEKMWNRYTQWEQEINSLTARKFIGELSAEYMKARSLYQEWLNVTNGLKRASPINLRTANKKNIPQPGTSDSNIQQLQIWLNWIKWERENKLMLSEDMLSQRISYVYKQGIQYMIFSAEMWYDYSMYISENSDRQNILYTALLANPDSPSLTFKLSECYELDNDSESVSNCFDKCTQTLLSQYKKIASDVNSGEDNNTEYEQELLYKQREKLTFVFCVYMNTMKRISGLSAARTVFGKCRKLKRILTHDVYVENAYLEFQNQNDYKTAFKVLELGLKYFQNDGVYINKYLDFLIFLNKDSQIKTLFETSVEKVQDLTQLKEIYKKMISYESKFGNLNNVYSLEKRFFERFPQENLIEVFTSRYQIQNSNLIKKLELTYMYNEEEDSYFSSGNGDGHHGSYNMSSSDRKRLMEETGNNGNFSNKKFKRDSELPTEVLDLLSVIPKRQYFNTNLLDAQKLVNFLNDQVEIPTVESTKSG</sequence>
<comment type="function">
    <text evidence="2 5">Component of the cleavage factor IA (CFIA) complex, which is involved in the endonucleolytic cleavage during polyadenylation-dependent pre-mRNA 3'-end formation and cooperates with the cleavage factor NAB4/CFIB and the cleavage and polyadenylation factor (CPF) complex.</text>
</comment>
<comment type="subunit">
    <text evidence="1 3 6">Component of the CFIA complex, which is composed of RNA14, RNA15, PCF11 and CLP1. Interacts with FIP1, PFS2, YSH1 and probably also with RNA15. Probably interacts with the phosphorylated CTD domain of RPB1/RNA polymerase II.</text>
</comment>
<comment type="interaction">
    <interactant intactId="EBI-15632">
        <id>P25298</id>
    </interactant>
    <interactant intactId="EBI-11783">
        <id>Q99383</id>
        <label>HRP1</label>
    </interactant>
    <organismsDiffer>false</organismsDiffer>
    <experiments>2</experiments>
</comment>
<comment type="interaction">
    <interactant intactId="EBI-15632">
        <id>P25298</id>
    </interactant>
    <interactant intactId="EBI-12980">
        <id>P39081</id>
        <label>PCF11</label>
    </interactant>
    <organismsDiffer>false</organismsDiffer>
    <experiments>11</experiments>
</comment>
<comment type="interaction">
    <interactant intactId="EBI-15632">
        <id>P25298</id>
    </interactant>
    <interactant intactId="EBI-15640">
        <id>P25299</id>
        <label>RNA15</label>
    </interactant>
    <organismsDiffer>false</organismsDiffer>
    <experiments>10</experiments>
</comment>
<comment type="subcellular location">
    <subcellularLocation>
        <location>Nucleus</location>
    </subcellularLocation>
    <subcellularLocation>
        <location>Cytoplasm</location>
    </subcellularLocation>
    <text>Nucleus and/or cytoplasm.</text>
</comment>
<comment type="miscellaneous">
    <text evidence="4">Present with 5350 molecules/cell in log phase SD medium.</text>
</comment>
<organism>
    <name type="scientific">Saccharomyces cerevisiae (strain ATCC 204508 / S288c)</name>
    <name type="common">Baker's yeast</name>
    <dbReference type="NCBI Taxonomy" id="559292"/>
    <lineage>
        <taxon>Eukaryota</taxon>
        <taxon>Fungi</taxon>
        <taxon>Dikarya</taxon>
        <taxon>Ascomycota</taxon>
        <taxon>Saccharomycotina</taxon>
        <taxon>Saccharomycetes</taxon>
        <taxon>Saccharomycetales</taxon>
        <taxon>Saccharomycetaceae</taxon>
        <taxon>Saccharomyces</taxon>
    </lineage>
</organism>
<accession>P25298</accession>
<accession>D6VZN5</accession>
<reference key="1">
    <citation type="journal article" date="1991" name="Mol. Cell. Biol.">
        <title>Mutations in the yeast RNA14 and RNA15 genes result in an abnormal mRNA decay rate; sequence analysis reveals an RNA-binding domain in the RNA15 protein.</title>
        <authorList>
            <person name="Minvielle-Sebastia L."/>
            <person name="Winsor B."/>
            <person name="Bonneaud N."/>
            <person name="Lacroute F."/>
        </authorList>
    </citation>
    <scope>NUCLEOTIDE SEQUENCE [GENOMIC DNA]</scope>
    <source>
        <strain>ATCC 28383 / FL100 / VTT C-80102</strain>
    </source>
</reference>
<reference key="2">
    <citation type="submission" date="1994-07" db="EMBL/GenBank/DDBJ databases">
        <authorList>
            <person name="Bonneaud N."/>
        </authorList>
    </citation>
    <scope>SEQUENCE REVISION</scope>
</reference>
<reference key="3">
    <citation type="journal article" date="1997" name="Nature">
        <title>The nucleotide sequence of Saccharomyces cerevisiae chromosome XIII.</title>
        <authorList>
            <person name="Bowman S."/>
            <person name="Churcher C.M."/>
            <person name="Badcock K."/>
            <person name="Brown D."/>
            <person name="Chillingworth T."/>
            <person name="Connor R."/>
            <person name="Dedman K."/>
            <person name="Devlin K."/>
            <person name="Gentles S."/>
            <person name="Hamlin N."/>
            <person name="Hunt S."/>
            <person name="Jagels K."/>
            <person name="Lye G."/>
            <person name="Moule S."/>
            <person name="Odell C."/>
            <person name="Pearson D."/>
            <person name="Rajandream M.A."/>
            <person name="Rice P."/>
            <person name="Skelton J."/>
            <person name="Walsh S.V."/>
            <person name="Whitehead S."/>
            <person name="Barrell B.G."/>
        </authorList>
    </citation>
    <scope>NUCLEOTIDE SEQUENCE [LARGE SCALE GENOMIC DNA]</scope>
    <source>
        <strain>ATCC 204508 / S288c</strain>
    </source>
</reference>
<reference key="4">
    <citation type="journal article" date="2014" name="G3 (Bethesda)">
        <title>The reference genome sequence of Saccharomyces cerevisiae: Then and now.</title>
        <authorList>
            <person name="Engel S.R."/>
            <person name="Dietrich F.S."/>
            <person name="Fisk D.G."/>
            <person name="Binkley G."/>
            <person name="Balakrishnan R."/>
            <person name="Costanzo M.C."/>
            <person name="Dwight S.S."/>
            <person name="Hitz B.C."/>
            <person name="Karra K."/>
            <person name="Nash R.S."/>
            <person name="Weng S."/>
            <person name="Wong E.D."/>
            <person name="Lloyd P."/>
            <person name="Skrzypek M.S."/>
            <person name="Miyasato S.R."/>
            <person name="Simison M."/>
            <person name="Cherry J.M."/>
        </authorList>
    </citation>
    <scope>GENOME REANNOTATION</scope>
    <source>
        <strain>ATCC 204508 / S288c</strain>
    </source>
</reference>
<reference key="5">
    <citation type="journal article" date="1994" name="Science">
        <title>RNA14 and RNA15 proteins as components of a yeast pre-mRNA 3'-end processing factor.</title>
        <authorList>
            <person name="Minvielle-Sebastia L."/>
            <person name="Preker P.J."/>
            <person name="Keller W."/>
        </authorList>
    </citation>
    <scope>FUNCTION</scope>
</reference>
<reference key="6">
    <citation type="journal article" date="1996" name="J. Biol. Chem.">
        <title>Purification of the Saccharomyces cerevisiae cleavage/polyadenylation factor I. Separation into two components that are required for both cleavage and polyadenylation of mRNA 3' ends.</title>
        <authorList>
            <person name="Kessler M.M."/>
            <person name="Zhao J."/>
            <person name="Moore C.L."/>
        </authorList>
    </citation>
    <scope>COMPOSITION OF THE CFIA COMPLEX</scope>
</reference>
<reference key="7">
    <citation type="journal article" date="1997" name="Proc. Natl. Acad. Sci. U.S.A.">
        <title>The major yeast poly(A)-binding protein is associated with cleavage factor IA and functions in premessenger RNA 3'-end formation.</title>
        <authorList>
            <person name="Minvielle-Sebastia L."/>
            <person name="Preker P.J."/>
            <person name="Wiederkehr T."/>
            <person name="Strahm Y."/>
            <person name="Keller W."/>
        </authorList>
    </citation>
    <scope>IDENTIFICATION IN THE CFIA COMPLEX</scope>
</reference>
<reference key="8">
    <citation type="journal article" date="2000" name="EMBO J.">
        <title>The WD-repeat protein pfs2p bridges two essential factors within the yeast pre-mRNA 3'-end-processing complex.</title>
        <authorList>
            <person name="Ohnacker M."/>
            <person name="Barabino S.M.L."/>
            <person name="Preker P.J."/>
            <person name="Keller W."/>
        </authorList>
    </citation>
    <scope>INTERACTION WITH FIP1; PFS2 AND YSH1</scope>
</reference>
<reference key="9">
    <citation type="journal article" date="2001" name="Proc. Natl. Acad. Sci. U.S.A.">
        <title>Five subunits are required for reconstitution of the cleavage and polyadenylation activities of Saccharomyces cerevisiae cleavage factor I.</title>
        <authorList>
            <person name="Gross S."/>
            <person name="Moore C."/>
        </authorList>
    </citation>
    <scope>FUNCTION OF THE CFIA COMPLEX</scope>
</reference>
<reference key="10">
    <citation type="journal article" date="2003" name="EMBO J.">
        <title>Independent functions of yeast Pcf11p in pre-mRNA 3' end processing and in transcription termination.</title>
        <authorList>
            <person name="Sadowski M."/>
            <person name="Dichtl B."/>
            <person name="Huebner W."/>
            <person name="Keller W."/>
        </authorList>
    </citation>
    <scope>INTERACTION WITH RBP1</scope>
</reference>
<reference key="11">
    <citation type="journal article" date="2003" name="Nature">
        <title>Global analysis of protein expression in yeast.</title>
        <authorList>
            <person name="Ghaemmaghami S."/>
            <person name="Huh W.-K."/>
            <person name="Bower K."/>
            <person name="Howson R.W."/>
            <person name="Belle A."/>
            <person name="Dephoure N."/>
            <person name="O'Shea E.K."/>
            <person name="Weissman J.S."/>
        </authorList>
    </citation>
    <scope>LEVEL OF PROTEIN EXPRESSION [LARGE SCALE ANALYSIS]</scope>
</reference>
<protein>
    <recommendedName>
        <fullName>mRNA 3'-end-processing protein RNA14</fullName>
    </recommendedName>
</protein>
<dbReference type="EMBL" id="M73461">
    <property type="protein sequence ID" value="AAA21300.1"/>
    <property type="molecule type" value="Genomic_DNA"/>
</dbReference>
<dbReference type="EMBL" id="Z49703">
    <property type="protein sequence ID" value="CAA89771.1"/>
    <property type="molecule type" value="Genomic_DNA"/>
</dbReference>
<dbReference type="EMBL" id="BK006946">
    <property type="protein sequence ID" value="DAA09959.1"/>
    <property type="molecule type" value="Genomic_DNA"/>
</dbReference>
<dbReference type="PIR" id="S54561">
    <property type="entry name" value="S54561"/>
</dbReference>
<dbReference type="RefSeq" id="NP_013777.1">
    <property type="nucleotide sequence ID" value="NM_001182559.1"/>
</dbReference>
<dbReference type="PDB" id="2L9B">
    <property type="method" value="NMR"/>
    <property type="chains" value="B=626-677"/>
</dbReference>
<dbReference type="PDBsum" id="2L9B"/>
<dbReference type="BMRB" id="P25298"/>
<dbReference type="SMR" id="P25298"/>
<dbReference type="BioGRID" id="35236">
    <property type="interactions" value="267"/>
</dbReference>
<dbReference type="ComplexPortal" id="CPX-1895">
    <property type="entry name" value="mRNA cleavage factor complex CFIA"/>
</dbReference>
<dbReference type="ComplexPortal" id="CPX-1896">
    <property type="entry name" value="mRNA cleavage factor complex CFI"/>
</dbReference>
<dbReference type="DIP" id="DIP-1488N"/>
<dbReference type="FunCoup" id="P25298">
    <property type="interactions" value="1388"/>
</dbReference>
<dbReference type="IntAct" id="P25298">
    <property type="interactions" value="41"/>
</dbReference>
<dbReference type="MINT" id="P25298"/>
<dbReference type="STRING" id="4932.YMR061W"/>
<dbReference type="iPTMnet" id="P25298"/>
<dbReference type="PaxDb" id="4932-YMR061W"/>
<dbReference type="PeptideAtlas" id="P25298"/>
<dbReference type="EnsemblFungi" id="YMR061W_mRNA">
    <property type="protein sequence ID" value="YMR061W"/>
    <property type="gene ID" value="YMR061W"/>
</dbReference>
<dbReference type="GeneID" id="855083"/>
<dbReference type="KEGG" id="sce:YMR061W"/>
<dbReference type="AGR" id="SGD:S000004665"/>
<dbReference type="SGD" id="S000004665">
    <property type="gene designation" value="RNA14"/>
</dbReference>
<dbReference type="VEuPathDB" id="FungiDB:YMR061W"/>
<dbReference type="eggNOG" id="KOG1914">
    <property type="taxonomic scope" value="Eukaryota"/>
</dbReference>
<dbReference type="GeneTree" id="ENSGT00390000006758"/>
<dbReference type="HOGENOM" id="CLU_007630_0_1_1"/>
<dbReference type="InParanoid" id="P25298"/>
<dbReference type="OMA" id="PKRQYFK"/>
<dbReference type="OrthoDB" id="26282at2759"/>
<dbReference type="BioCyc" id="YEAST:G3O-32764-MONOMER"/>
<dbReference type="BioGRID-ORCS" id="855083">
    <property type="hits" value="2 hits in 10 CRISPR screens"/>
</dbReference>
<dbReference type="EvolutionaryTrace" id="P25298"/>
<dbReference type="PRO" id="PR:P25298"/>
<dbReference type="Proteomes" id="UP000002311">
    <property type="component" value="Chromosome XIII"/>
</dbReference>
<dbReference type="RNAct" id="P25298">
    <property type="molecule type" value="protein"/>
</dbReference>
<dbReference type="GO" id="GO:0005829">
    <property type="term" value="C:cytosol"/>
    <property type="evidence" value="ECO:0000314"/>
    <property type="project" value="SGD"/>
</dbReference>
<dbReference type="GO" id="GO:0005739">
    <property type="term" value="C:mitochondrion"/>
    <property type="evidence" value="ECO:0000314"/>
    <property type="project" value="SGD"/>
</dbReference>
<dbReference type="GO" id="GO:0005849">
    <property type="term" value="C:mRNA cleavage factor complex"/>
    <property type="evidence" value="ECO:0000353"/>
    <property type="project" value="ComplexPortal"/>
</dbReference>
<dbReference type="GO" id="GO:0005848">
    <property type="term" value="C:mRNA cleavage stimulating factor complex"/>
    <property type="evidence" value="ECO:0000353"/>
    <property type="project" value="SGD"/>
</dbReference>
<dbReference type="GO" id="GO:0005634">
    <property type="term" value="C:nucleus"/>
    <property type="evidence" value="ECO:0000314"/>
    <property type="project" value="SGD"/>
</dbReference>
<dbReference type="GO" id="GO:0003729">
    <property type="term" value="F:mRNA binding"/>
    <property type="evidence" value="ECO:0000318"/>
    <property type="project" value="GO_Central"/>
</dbReference>
<dbReference type="GO" id="GO:0031124">
    <property type="term" value="P:mRNA 3'-end processing"/>
    <property type="evidence" value="ECO:0000314"/>
    <property type="project" value="ComplexPortal"/>
</dbReference>
<dbReference type="GO" id="GO:0006397">
    <property type="term" value="P:mRNA processing"/>
    <property type="evidence" value="ECO:0000314"/>
    <property type="project" value="SGD"/>
</dbReference>
<dbReference type="GO" id="GO:0072423">
    <property type="term" value="P:response to DNA damage checkpoint signaling"/>
    <property type="evidence" value="ECO:0000315"/>
    <property type="project" value="SGD"/>
</dbReference>
<dbReference type="GO" id="GO:0031123">
    <property type="term" value="P:RNA 3'-end processing"/>
    <property type="evidence" value="ECO:0000318"/>
    <property type="project" value="GO_Central"/>
</dbReference>
<dbReference type="FunFam" id="1.25.40.1040:FF:000013">
    <property type="entry name" value="Rna14p"/>
    <property type="match status" value="1"/>
</dbReference>
<dbReference type="Gene3D" id="1.25.40.1040">
    <property type="match status" value="1"/>
</dbReference>
<dbReference type="Gene3D" id="6.10.250.1660">
    <property type="match status" value="1"/>
</dbReference>
<dbReference type="InterPro" id="IPR003107">
    <property type="entry name" value="HAT"/>
</dbReference>
<dbReference type="InterPro" id="IPR045243">
    <property type="entry name" value="Rna14-like"/>
</dbReference>
<dbReference type="InterPro" id="IPR008847">
    <property type="entry name" value="Suf"/>
</dbReference>
<dbReference type="InterPro" id="IPR011990">
    <property type="entry name" value="TPR-like_helical_dom_sf"/>
</dbReference>
<dbReference type="PANTHER" id="PTHR19980:SF0">
    <property type="entry name" value="CLEAVAGE STIMULATION FACTOR SUBUNIT 3"/>
    <property type="match status" value="1"/>
</dbReference>
<dbReference type="PANTHER" id="PTHR19980">
    <property type="entry name" value="RNA CLEAVAGE STIMULATION FACTOR"/>
    <property type="match status" value="1"/>
</dbReference>
<dbReference type="Pfam" id="PF05843">
    <property type="entry name" value="Suf"/>
    <property type="match status" value="1"/>
</dbReference>
<dbReference type="SMART" id="SM00386">
    <property type="entry name" value="HAT"/>
    <property type="match status" value="8"/>
</dbReference>
<dbReference type="SUPFAM" id="SSF48452">
    <property type="entry name" value="TPR-like"/>
    <property type="match status" value="1"/>
</dbReference>
<name>RNA14_YEAST</name>
<evidence type="ECO:0000269" key="1">
    <source>
    </source>
</evidence>
<evidence type="ECO:0000269" key="2">
    <source>
    </source>
</evidence>
<evidence type="ECO:0000269" key="3">
    <source>
    </source>
</evidence>
<evidence type="ECO:0000269" key="4">
    <source>
    </source>
</evidence>
<evidence type="ECO:0000269" key="5">
    <source>
    </source>
</evidence>
<evidence type="ECO:0000269" key="6">
    <source>
    </source>
</evidence>
<evidence type="ECO:0007829" key="7">
    <source>
        <dbReference type="PDB" id="2L9B"/>
    </source>
</evidence>
<gene>
    <name type="primary">RNA14</name>
    <name type="ordered locus">YMR061W</name>
    <name type="ORF">YM9796.14</name>
</gene>